<keyword id="KW-0687">Ribonucleoprotein</keyword>
<keyword id="KW-0689">Ribosomal protein</keyword>
<keyword id="KW-0694">RNA-binding</keyword>
<keyword id="KW-0699">rRNA-binding</keyword>
<proteinExistence type="inferred from homology"/>
<protein>
    <recommendedName>
        <fullName evidence="1">Large ribosomal subunit protein uL4</fullName>
    </recommendedName>
    <alternativeName>
        <fullName evidence="3">50S ribosomal protein L4</fullName>
    </alternativeName>
</protein>
<gene>
    <name evidence="1" type="primary">rplD</name>
    <name type="ordered locus">BF4180</name>
</gene>
<organism>
    <name type="scientific">Bacteroides fragilis (strain YCH46)</name>
    <dbReference type="NCBI Taxonomy" id="295405"/>
    <lineage>
        <taxon>Bacteria</taxon>
        <taxon>Pseudomonadati</taxon>
        <taxon>Bacteroidota</taxon>
        <taxon>Bacteroidia</taxon>
        <taxon>Bacteroidales</taxon>
        <taxon>Bacteroidaceae</taxon>
        <taxon>Bacteroides</taxon>
    </lineage>
</organism>
<feature type="chain" id="PRO_0000242342" description="Large ribosomal subunit protein uL4">
    <location>
        <begin position="1"/>
        <end position="208"/>
    </location>
</feature>
<feature type="region of interest" description="Disordered" evidence="2">
    <location>
        <begin position="44"/>
        <end position="79"/>
    </location>
</feature>
<dbReference type="EMBL" id="AP006841">
    <property type="protein sequence ID" value="BAD50923.1"/>
    <property type="molecule type" value="Genomic_DNA"/>
</dbReference>
<dbReference type="RefSeq" id="WP_005782191.1">
    <property type="nucleotide sequence ID" value="NZ_UYXF01000007.1"/>
</dbReference>
<dbReference type="RefSeq" id="YP_101457.1">
    <property type="nucleotide sequence ID" value="NC_006347.1"/>
</dbReference>
<dbReference type="SMR" id="Q64NK9"/>
<dbReference type="STRING" id="295405.BF4180"/>
<dbReference type="GeneID" id="93105323"/>
<dbReference type="KEGG" id="bfr:BF4180"/>
<dbReference type="PATRIC" id="fig|295405.11.peg.4034"/>
<dbReference type="HOGENOM" id="CLU_041575_5_2_10"/>
<dbReference type="OrthoDB" id="9803201at2"/>
<dbReference type="Proteomes" id="UP000002197">
    <property type="component" value="Chromosome"/>
</dbReference>
<dbReference type="GO" id="GO:1990904">
    <property type="term" value="C:ribonucleoprotein complex"/>
    <property type="evidence" value="ECO:0007669"/>
    <property type="project" value="UniProtKB-KW"/>
</dbReference>
<dbReference type="GO" id="GO:0005840">
    <property type="term" value="C:ribosome"/>
    <property type="evidence" value="ECO:0007669"/>
    <property type="project" value="UniProtKB-KW"/>
</dbReference>
<dbReference type="GO" id="GO:0019843">
    <property type="term" value="F:rRNA binding"/>
    <property type="evidence" value="ECO:0007669"/>
    <property type="project" value="UniProtKB-UniRule"/>
</dbReference>
<dbReference type="GO" id="GO:0003735">
    <property type="term" value="F:structural constituent of ribosome"/>
    <property type="evidence" value="ECO:0007669"/>
    <property type="project" value="InterPro"/>
</dbReference>
<dbReference type="GO" id="GO:0006412">
    <property type="term" value="P:translation"/>
    <property type="evidence" value="ECO:0007669"/>
    <property type="project" value="UniProtKB-UniRule"/>
</dbReference>
<dbReference type="FunFam" id="3.40.1370.10:FF:000009">
    <property type="entry name" value="50S ribosomal protein L4"/>
    <property type="match status" value="1"/>
</dbReference>
<dbReference type="Gene3D" id="3.40.1370.10">
    <property type="match status" value="1"/>
</dbReference>
<dbReference type="HAMAP" id="MF_01328_B">
    <property type="entry name" value="Ribosomal_uL4_B"/>
    <property type="match status" value="1"/>
</dbReference>
<dbReference type="InterPro" id="IPR002136">
    <property type="entry name" value="Ribosomal_uL4"/>
</dbReference>
<dbReference type="InterPro" id="IPR013005">
    <property type="entry name" value="Ribosomal_uL4-like"/>
</dbReference>
<dbReference type="InterPro" id="IPR023574">
    <property type="entry name" value="Ribosomal_uL4_dom_sf"/>
</dbReference>
<dbReference type="NCBIfam" id="TIGR03953">
    <property type="entry name" value="rplD_bact"/>
    <property type="match status" value="1"/>
</dbReference>
<dbReference type="PANTHER" id="PTHR10746">
    <property type="entry name" value="50S RIBOSOMAL PROTEIN L4"/>
    <property type="match status" value="1"/>
</dbReference>
<dbReference type="PANTHER" id="PTHR10746:SF6">
    <property type="entry name" value="LARGE RIBOSOMAL SUBUNIT PROTEIN UL4M"/>
    <property type="match status" value="1"/>
</dbReference>
<dbReference type="Pfam" id="PF00573">
    <property type="entry name" value="Ribosomal_L4"/>
    <property type="match status" value="1"/>
</dbReference>
<dbReference type="SUPFAM" id="SSF52166">
    <property type="entry name" value="Ribosomal protein L4"/>
    <property type="match status" value="1"/>
</dbReference>
<sequence length="208" mass="23003">MEVNVYNIKGEDTGRKVTLNESIFGIEPNDHAIYLDVKQFMANQRQGTHKSKERSEISGSTRKIGRQKGGGGARRGDMNSPVLVGGGRVFGPKPRDYYFKLNKKVKTLARKSALSYKAQDNAIVVVEDFNFEAPKTKVFVEMTKNLKVSDKKLLVVLPEANKNVYLSARNIEGANVQTISGLNTYRVLNAGVVVLTESSLKAIDNILI</sequence>
<accession>Q64NK9</accession>
<comment type="function">
    <text evidence="1">One of the primary rRNA binding proteins, this protein initially binds near the 5'-end of the 23S rRNA. It is important during the early stages of 50S assembly. It makes multiple contacts with different domains of the 23S rRNA in the assembled 50S subunit and ribosome.</text>
</comment>
<comment type="function">
    <text evidence="1">Forms part of the polypeptide exit tunnel.</text>
</comment>
<comment type="subunit">
    <text evidence="1">Part of the 50S ribosomal subunit.</text>
</comment>
<comment type="similarity">
    <text evidence="1">Belongs to the universal ribosomal protein uL4 family.</text>
</comment>
<name>RL4_BACFR</name>
<reference key="1">
    <citation type="journal article" date="2004" name="Proc. Natl. Acad. Sci. U.S.A.">
        <title>Genomic analysis of Bacteroides fragilis reveals extensive DNA inversions regulating cell surface adaptation.</title>
        <authorList>
            <person name="Kuwahara T."/>
            <person name="Yamashita A."/>
            <person name="Hirakawa H."/>
            <person name="Nakayama H."/>
            <person name="Toh H."/>
            <person name="Okada N."/>
            <person name="Kuhara S."/>
            <person name="Hattori M."/>
            <person name="Hayashi T."/>
            <person name="Ohnishi Y."/>
        </authorList>
    </citation>
    <scope>NUCLEOTIDE SEQUENCE [LARGE SCALE GENOMIC DNA]</scope>
    <source>
        <strain>YCH46</strain>
    </source>
</reference>
<evidence type="ECO:0000255" key="1">
    <source>
        <dbReference type="HAMAP-Rule" id="MF_01328"/>
    </source>
</evidence>
<evidence type="ECO:0000256" key="2">
    <source>
        <dbReference type="SAM" id="MobiDB-lite"/>
    </source>
</evidence>
<evidence type="ECO:0000305" key="3"/>